<accession>B8CTW4</accession>
<keyword id="KW-0378">Hydrolase</keyword>
<keyword id="KW-0511">Multifunctional enzyme</keyword>
<keyword id="KW-0658">Purine biosynthesis</keyword>
<keyword id="KW-0808">Transferase</keyword>
<evidence type="ECO:0000255" key="1">
    <source>
        <dbReference type="HAMAP-Rule" id="MF_00139"/>
    </source>
</evidence>
<evidence type="ECO:0000255" key="2">
    <source>
        <dbReference type="PROSITE-ProRule" id="PRU01202"/>
    </source>
</evidence>
<proteinExistence type="inferred from homology"/>
<comment type="catalytic activity">
    <reaction evidence="1">
        <text>(6R)-10-formyltetrahydrofolate + 5-amino-1-(5-phospho-beta-D-ribosyl)imidazole-4-carboxamide = 5-formamido-1-(5-phospho-D-ribosyl)imidazole-4-carboxamide + (6S)-5,6,7,8-tetrahydrofolate</text>
        <dbReference type="Rhea" id="RHEA:22192"/>
        <dbReference type="ChEBI" id="CHEBI:57453"/>
        <dbReference type="ChEBI" id="CHEBI:58467"/>
        <dbReference type="ChEBI" id="CHEBI:58475"/>
        <dbReference type="ChEBI" id="CHEBI:195366"/>
        <dbReference type="EC" id="2.1.2.3"/>
    </reaction>
</comment>
<comment type="catalytic activity">
    <reaction evidence="1">
        <text>IMP + H2O = 5-formamido-1-(5-phospho-D-ribosyl)imidazole-4-carboxamide</text>
        <dbReference type="Rhea" id="RHEA:18445"/>
        <dbReference type="ChEBI" id="CHEBI:15377"/>
        <dbReference type="ChEBI" id="CHEBI:58053"/>
        <dbReference type="ChEBI" id="CHEBI:58467"/>
        <dbReference type="EC" id="3.5.4.10"/>
    </reaction>
</comment>
<comment type="pathway">
    <text evidence="1">Purine metabolism; IMP biosynthesis via de novo pathway; 5-formamido-1-(5-phospho-D-ribosyl)imidazole-4-carboxamide from 5-amino-1-(5-phospho-D-ribosyl)imidazole-4-carboxamide (10-formyl THF route): step 1/1.</text>
</comment>
<comment type="pathway">
    <text evidence="1">Purine metabolism; IMP biosynthesis via de novo pathway; IMP from 5-formamido-1-(5-phospho-D-ribosyl)imidazole-4-carboxamide: step 1/1.</text>
</comment>
<comment type="domain">
    <text evidence="1">The IMP cyclohydrolase activity resides in the N-terminal region.</text>
</comment>
<comment type="similarity">
    <text evidence="1">Belongs to the PurH family.</text>
</comment>
<feature type="chain" id="PRO_1000192980" description="Bifunctional purine biosynthesis protein PurH">
    <location>
        <begin position="1"/>
        <end position="529"/>
    </location>
</feature>
<feature type="domain" description="MGS-like" evidence="2">
    <location>
        <begin position="1"/>
        <end position="148"/>
    </location>
</feature>
<reference key="1">
    <citation type="journal article" date="2008" name="PLoS ONE">
        <title>Environmental adaptation: genomic analysis of the piezotolerant and psychrotolerant deep-sea iron reducing bacterium Shewanella piezotolerans WP3.</title>
        <authorList>
            <person name="Wang F."/>
            <person name="Wang J."/>
            <person name="Jian H."/>
            <person name="Zhang B."/>
            <person name="Li S."/>
            <person name="Wang F."/>
            <person name="Zeng X."/>
            <person name="Gao L."/>
            <person name="Bartlett D.H."/>
            <person name="Yu J."/>
            <person name="Hu S."/>
            <person name="Xiao X."/>
        </authorList>
    </citation>
    <scope>NUCLEOTIDE SEQUENCE [LARGE SCALE GENOMIC DNA]</scope>
    <source>
        <strain>WP3 / JCM 13877</strain>
    </source>
</reference>
<dbReference type="EC" id="2.1.2.3" evidence="1"/>
<dbReference type="EC" id="3.5.4.10" evidence="1"/>
<dbReference type="EMBL" id="CP000472">
    <property type="protein sequence ID" value="ACJ31358.1"/>
    <property type="molecule type" value="Genomic_DNA"/>
</dbReference>
<dbReference type="RefSeq" id="WP_020914688.1">
    <property type="nucleotide sequence ID" value="NC_011566.1"/>
</dbReference>
<dbReference type="SMR" id="B8CTW4"/>
<dbReference type="STRING" id="225849.swp_4724"/>
<dbReference type="KEGG" id="swp:swp_4724"/>
<dbReference type="eggNOG" id="COG0138">
    <property type="taxonomic scope" value="Bacteria"/>
</dbReference>
<dbReference type="HOGENOM" id="CLU_016316_5_2_6"/>
<dbReference type="OrthoDB" id="9802065at2"/>
<dbReference type="UniPathway" id="UPA00074">
    <property type="reaction ID" value="UER00133"/>
</dbReference>
<dbReference type="UniPathway" id="UPA00074">
    <property type="reaction ID" value="UER00135"/>
</dbReference>
<dbReference type="Proteomes" id="UP000000753">
    <property type="component" value="Chromosome"/>
</dbReference>
<dbReference type="GO" id="GO:0005829">
    <property type="term" value="C:cytosol"/>
    <property type="evidence" value="ECO:0007669"/>
    <property type="project" value="TreeGrafter"/>
</dbReference>
<dbReference type="GO" id="GO:0003937">
    <property type="term" value="F:IMP cyclohydrolase activity"/>
    <property type="evidence" value="ECO:0007669"/>
    <property type="project" value="UniProtKB-UniRule"/>
</dbReference>
<dbReference type="GO" id="GO:0004643">
    <property type="term" value="F:phosphoribosylaminoimidazolecarboxamide formyltransferase activity"/>
    <property type="evidence" value="ECO:0007669"/>
    <property type="project" value="UniProtKB-UniRule"/>
</dbReference>
<dbReference type="GO" id="GO:0006189">
    <property type="term" value="P:'de novo' IMP biosynthetic process"/>
    <property type="evidence" value="ECO:0007669"/>
    <property type="project" value="UniProtKB-UniRule"/>
</dbReference>
<dbReference type="CDD" id="cd01421">
    <property type="entry name" value="IMPCH"/>
    <property type="match status" value="1"/>
</dbReference>
<dbReference type="FunFam" id="3.40.140.20:FF:000001">
    <property type="entry name" value="Bifunctional purine biosynthesis protein PurH"/>
    <property type="match status" value="1"/>
</dbReference>
<dbReference type="FunFam" id="3.40.140.20:FF:000002">
    <property type="entry name" value="Bifunctional purine biosynthesis protein PurH"/>
    <property type="match status" value="1"/>
</dbReference>
<dbReference type="FunFam" id="3.40.50.1380:FF:000001">
    <property type="entry name" value="Bifunctional purine biosynthesis protein PurH"/>
    <property type="match status" value="1"/>
</dbReference>
<dbReference type="Gene3D" id="3.40.140.20">
    <property type="match status" value="2"/>
</dbReference>
<dbReference type="Gene3D" id="3.40.50.1380">
    <property type="entry name" value="Methylglyoxal synthase-like domain"/>
    <property type="match status" value="1"/>
</dbReference>
<dbReference type="HAMAP" id="MF_00139">
    <property type="entry name" value="PurH"/>
    <property type="match status" value="1"/>
</dbReference>
<dbReference type="InterPro" id="IPR024051">
    <property type="entry name" value="AICAR_Tfase_dup_dom_sf"/>
</dbReference>
<dbReference type="InterPro" id="IPR016193">
    <property type="entry name" value="Cytidine_deaminase-like"/>
</dbReference>
<dbReference type="InterPro" id="IPR011607">
    <property type="entry name" value="MGS-like_dom"/>
</dbReference>
<dbReference type="InterPro" id="IPR036914">
    <property type="entry name" value="MGS-like_dom_sf"/>
</dbReference>
<dbReference type="InterPro" id="IPR002695">
    <property type="entry name" value="PurH-like"/>
</dbReference>
<dbReference type="NCBIfam" id="NF002049">
    <property type="entry name" value="PRK00881.1"/>
    <property type="match status" value="1"/>
</dbReference>
<dbReference type="NCBIfam" id="TIGR00355">
    <property type="entry name" value="purH"/>
    <property type="match status" value="1"/>
</dbReference>
<dbReference type="PANTHER" id="PTHR11692:SF0">
    <property type="entry name" value="BIFUNCTIONAL PURINE BIOSYNTHESIS PROTEIN ATIC"/>
    <property type="match status" value="1"/>
</dbReference>
<dbReference type="PANTHER" id="PTHR11692">
    <property type="entry name" value="BIFUNCTIONAL PURINE BIOSYNTHESIS PROTEIN PURH"/>
    <property type="match status" value="1"/>
</dbReference>
<dbReference type="Pfam" id="PF01808">
    <property type="entry name" value="AICARFT_IMPCHas"/>
    <property type="match status" value="1"/>
</dbReference>
<dbReference type="Pfam" id="PF02142">
    <property type="entry name" value="MGS"/>
    <property type="match status" value="1"/>
</dbReference>
<dbReference type="PIRSF" id="PIRSF000414">
    <property type="entry name" value="AICARFT_IMPCHas"/>
    <property type="match status" value="1"/>
</dbReference>
<dbReference type="SMART" id="SM00798">
    <property type="entry name" value="AICARFT_IMPCHas"/>
    <property type="match status" value="1"/>
</dbReference>
<dbReference type="SMART" id="SM00851">
    <property type="entry name" value="MGS"/>
    <property type="match status" value="1"/>
</dbReference>
<dbReference type="SUPFAM" id="SSF53927">
    <property type="entry name" value="Cytidine deaminase-like"/>
    <property type="match status" value="1"/>
</dbReference>
<dbReference type="SUPFAM" id="SSF52335">
    <property type="entry name" value="Methylglyoxal synthase-like"/>
    <property type="match status" value="1"/>
</dbReference>
<dbReference type="PROSITE" id="PS51855">
    <property type="entry name" value="MGS"/>
    <property type="match status" value="1"/>
</dbReference>
<protein>
    <recommendedName>
        <fullName evidence="1">Bifunctional purine biosynthesis protein PurH</fullName>
    </recommendedName>
    <domain>
        <recommendedName>
            <fullName evidence="1">Phosphoribosylaminoimidazolecarboxamide formyltransferase</fullName>
            <ecNumber evidence="1">2.1.2.3</ecNumber>
        </recommendedName>
        <alternativeName>
            <fullName evidence="1">AICAR transformylase</fullName>
        </alternativeName>
    </domain>
    <domain>
        <recommendedName>
            <fullName evidence="1">IMP cyclohydrolase</fullName>
            <ecNumber evidence="1">3.5.4.10</ecNumber>
        </recommendedName>
        <alternativeName>
            <fullName evidence="1">ATIC</fullName>
        </alternativeName>
        <alternativeName>
            <fullName evidence="1">IMP synthase</fullName>
        </alternativeName>
        <alternativeName>
            <fullName evidence="1">Inosinicase</fullName>
        </alternativeName>
    </domain>
</protein>
<sequence length="529" mass="56980">MNNARPIRRALLSVSDKTGILEFAQALHAQGVELLSTGGTARLLADNGVPVIEVSDYTGHPEIMDGRVKTLHPKVHGGILARRGIDELVMEQNNINPIDLVAVNLYPFAETVAKEGCTLADAVENIDIGGPTMVRSTAKNHKDTTIIVNASDYGRVIAEMQANEGSTTLETRFDLAIAAFEHTAAYDGMIANYFGTKVPAHSKDECHEDSKFPRTYNTQLVKKQDLRYGENSHQTAAFYVDTNLDEASVATAVQLQGKALSYNNIADTDSALECVKEFDEPACVIVKHANPCGVAIGDNLLEAYNRAFQTDPTSAFGGIIAFNGELDAATAAAIVERQFVEVIIAPSVSQAARDVVAAKANVRLLECGQWASKTTSLDYKRVNGGLLLQDRDQGMVGIDDVKVVSKRQPTASEMKDLMFCWKVAKFVKSNAIVYAKNSMTIGVGAGQMSRVYSAKVAGIKAADEGLVVQDSVMASDAFFPFRDGIDAAAEAGISCIIQPGGSIRDEEIINAADEHGMAMVFTGMRHFRH</sequence>
<organism>
    <name type="scientific">Shewanella piezotolerans (strain WP3 / JCM 13877)</name>
    <dbReference type="NCBI Taxonomy" id="225849"/>
    <lineage>
        <taxon>Bacteria</taxon>
        <taxon>Pseudomonadati</taxon>
        <taxon>Pseudomonadota</taxon>
        <taxon>Gammaproteobacteria</taxon>
        <taxon>Alteromonadales</taxon>
        <taxon>Shewanellaceae</taxon>
        <taxon>Shewanella</taxon>
    </lineage>
</organism>
<gene>
    <name evidence="1" type="primary">purH</name>
    <name type="ordered locus">swp_4724</name>
</gene>
<name>PUR9_SHEPW</name>